<organism>
    <name type="scientific">Arabidopsis thaliana</name>
    <name type="common">Mouse-ear cress</name>
    <dbReference type="NCBI Taxonomy" id="3702"/>
    <lineage>
        <taxon>Eukaryota</taxon>
        <taxon>Viridiplantae</taxon>
        <taxon>Streptophyta</taxon>
        <taxon>Embryophyta</taxon>
        <taxon>Tracheophyta</taxon>
        <taxon>Spermatophyta</taxon>
        <taxon>Magnoliopsida</taxon>
        <taxon>eudicotyledons</taxon>
        <taxon>Gunneridae</taxon>
        <taxon>Pentapetalae</taxon>
        <taxon>rosids</taxon>
        <taxon>malvids</taxon>
        <taxon>Brassicales</taxon>
        <taxon>Brassicaceae</taxon>
        <taxon>Camelineae</taxon>
        <taxon>Arabidopsis</taxon>
    </lineage>
</organism>
<gene>
    <name type="primary">FTA</name>
    <name type="ordered locus">At3g59380</name>
    <name type="ORF">F25L23.240</name>
</gene>
<reference key="1">
    <citation type="online journal article" date="1998" name="Plant Gene Register">
        <title>Nucleotide sequence of a putative protein farnesyltransferase subunit A from Arabidopsis.</title>
        <authorList>
            <person name="Belbahri L."/>
            <person name="Villaroel R."/>
            <person name="Inze D."/>
            <person name="Thomas D."/>
            <person name="Thomasset B."/>
        </authorList>
        <locator>PGR98-134</locator>
    </citation>
    <scope>NUCLEOTIDE SEQUENCE [MRNA]</scope>
    <source>
        <strain>cv. Columbia</strain>
    </source>
</reference>
<reference key="2">
    <citation type="journal article" date="2000" name="Nature">
        <title>Sequence and analysis of chromosome 3 of the plant Arabidopsis thaliana.</title>
        <authorList>
            <person name="Salanoubat M."/>
            <person name="Lemcke K."/>
            <person name="Rieger M."/>
            <person name="Ansorge W."/>
            <person name="Unseld M."/>
            <person name="Fartmann B."/>
            <person name="Valle G."/>
            <person name="Bloecker H."/>
            <person name="Perez-Alonso M."/>
            <person name="Obermaier B."/>
            <person name="Delseny M."/>
            <person name="Boutry M."/>
            <person name="Grivell L.A."/>
            <person name="Mache R."/>
            <person name="Puigdomenech P."/>
            <person name="De Simone V."/>
            <person name="Choisne N."/>
            <person name="Artiguenave F."/>
            <person name="Robert C."/>
            <person name="Brottier P."/>
            <person name="Wincker P."/>
            <person name="Cattolico L."/>
            <person name="Weissenbach J."/>
            <person name="Saurin W."/>
            <person name="Quetier F."/>
            <person name="Schaefer M."/>
            <person name="Mueller-Auer S."/>
            <person name="Gabel C."/>
            <person name="Fuchs M."/>
            <person name="Benes V."/>
            <person name="Wurmbach E."/>
            <person name="Drzonek H."/>
            <person name="Erfle H."/>
            <person name="Jordan N."/>
            <person name="Bangert S."/>
            <person name="Wiedelmann R."/>
            <person name="Kranz H."/>
            <person name="Voss H."/>
            <person name="Holland R."/>
            <person name="Brandt P."/>
            <person name="Nyakatura G."/>
            <person name="Vezzi A."/>
            <person name="D'Angelo M."/>
            <person name="Pallavicini A."/>
            <person name="Toppo S."/>
            <person name="Simionati B."/>
            <person name="Conrad A."/>
            <person name="Hornischer K."/>
            <person name="Kauer G."/>
            <person name="Loehnert T.-H."/>
            <person name="Nordsiek G."/>
            <person name="Reichelt J."/>
            <person name="Scharfe M."/>
            <person name="Schoen O."/>
            <person name="Bargues M."/>
            <person name="Terol J."/>
            <person name="Climent J."/>
            <person name="Navarro P."/>
            <person name="Collado C."/>
            <person name="Perez-Perez A."/>
            <person name="Ottenwaelder B."/>
            <person name="Duchemin D."/>
            <person name="Cooke R."/>
            <person name="Laudie M."/>
            <person name="Berger-Llauro C."/>
            <person name="Purnelle B."/>
            <person name="Masuy D."/>
            <person name="de Haan M."/>
            <person name="Maarse A.C."/>
            <person name="Alcaraz J.-P."/>
            <person name="Cottet A."/>
            <person name="Casacuberta E."/>
            <person name="Monfort A."/>
            <person name="Argiriou A."/>
            <person name="Flores M."/>
            <person name="Liguori R."/>
            <person name="Vitale D."/>
            <person name="Mannhaupt G."/>
            <person name="Haase D."/>
            <person name="Schoof H."/>
            <person name="Rudd S."/>
            <person name="Zaccaria P."/>
            <person name="Mewes H.-W."/>
            <person name="Mayer K.F.X."/>
            <person name="Kaul S."/>
            <person name="Town C.D."/>
            <person name="Koo H.L."/>
            <person name="Tallon L.J."/>
            <person name="Jenkins J."/>
            <person name="Rooney T."/>
            <person name="Rizzo M."/>
            <person name="Walts A."/>
            <person name="Utterback T."/>
            <person name="Fujii C.Y."/>
            <person name="Shea T.P."/>
            <person name="Creasy T.H."/>
            <person name="Haas B."/>
            <person name="Maiti R."/>
            <person name="Wu D."/>
            <person name="Peterson J."/>
            <person name="Van Aken S."/>
            <person name="Pai G."/>
            <person name="Militscher J."/>
            <person name="Sellers P."/>
            <person name="Gill J.E."/>
            <person name="Feldblyum T.V."/>
            <person name="Preuss D."/>
            <person name="Lin X."/>
            <person name="Nierman W.C."/>
            <person name="Salzberg S.L."/>
            <person name="White O."/>
            <person name="Venter J.C."/>
            <person name="Fraser C.M."/>
            <person name="Kaneko T."/>
            <person name="Nakamura Y."/>
            <person name="Sato S."/>
            <person name="Kato T."/>
            <person name="Asamizu E."/>
            <person name="Sasamoto S."/>
            <person name="Kimura T."/>
            <person name="Idesawa K."/>
            <person name="Kawashima K."/>
            <person name="Kishida Y."/>
            <person name="Kiyokawa C."/>
            <person name="Kohara M."/>
            <person name="Matsumoto M."/>
            <person name="Matsuno A."/>
            <person name="Muraki A."/>
            <person name="Nakayama S."/>
            <person name="Nakazaki N."/>
            <person name="Shinpo S."/>
            <person name="Takeuchi C."/>
            <person name="Wada T."/>
            <person name="Watanabe A."/>
            <person name="Yamada M."/>
            <person name="Yasuda M."/>
            <person name="Tabata S."/>
        </authorList>
    </citation>
    <scope>NUCLEOTIDE SEQUENCE [LARGE SCALE GENOMIC DNA]</scope>
    <source>
        <strain>cv. Columbia</strain>
    </source>
</reference>
<reference key="3">
    <citation type="journal article" date="2017" name="Plant J.">
        <title>Araport11: a complete reannotation of the Arabidopsis thaliana reference genome.</title>
        <authorList>
            <person name="Cheng C.Y."/>
            <person name="Krishnakumar V."/>
            <person name="Chan A.P."/>
            <person name="Thibaud-Nissen F."/>
            <person name="Schobel S."/>
            <person name="Town C.D."/>
        </authorList>
    </citation>
    <scope>GENOME REANNOTATION</scope>
    <source>
        <strain>cv. Columbia</strain>
    </source>
</reference>
<reference key="4">
    <citation type="journal article" date="2001" name="Plant Physiol.">
        <title>Efficient prenylation by a plant geranylgeranyltransferase-I requires a functional CaaL box motif and a proximal polybasic domain.</title>
        <authorList>
            <person name="Caldelari D."/>
            <person name="Sternberg H."/>
            <person name="Rodriguez-Concepcion M."/>
            <person name="Gruissem W."/>
            <person name="Yalovsky S."/>
        </authorList>
    </citation>
    <scope>FUNCTION</scope>
    <scope>BIOPHYSICOCHEMICAL PROPERTIES</scope>
</reference>
<reference key="5">
    <citation type="journal article" date="2010" name="BMC Plant Biol.">
        <title>The CaaX specificities of Arabidopsis protein prenyltransferases explain era1 and ggb phenotypes.</title>
        <authorList>
            <person name="Andrews M."/>
            <person name="Huizinga D.H."/>
            <person name="Crowell D.N."/>
        </authorList>
    </citation>
    <scope>FUNCTION</scope>
    <scope>BIOPHYSICOCHEMICAL PROPERTIES</scope>
</reference>
<proteinExistence type="evidence at protein level"/>
<feature type="chain" id="PRO_0000119749" description="Protein farnesyltransferase/geranylgeranyltransferase type-1 subunit alpha">
    <location>
        <begin position="1"/>
        <end position="326"/>
    </location>
</feature>
<feature type="repeat" description="PFTA 1">
    <location>
        <begin position="55"/>
        <end position="89"/>
    </location>
</feature>
<feature type="repeat" description="PFTA 2">
    <location>
        <begin position="90"/>
        <end position="124"/>
    </location>
</feature>
<feature type="repeat" description="PFTA 3">
    <location>
        <begin position="126"/>
        <end position="160"/>
    </location>
</feature>
<feature type="repeat" description="PFTA 4">
    <location>
        <begin position="161"/>
        <end position="194"/>
    </location>
</feature>
<feature type="repeat" description="PFTA 5">
    <location>
        <begin position="201"/>
        <end position="235"/>
    </location>
</feature>
<feature type="sequence conflict" description="In Ref. 1; AAC61853." evidence="4" ref="1">
    <original>V</original>
    <variation>I</variation>
    <location>
        <position position="309"/>
    </location>
</feature>
<protein>
    <recommendedName>
        <fullName>Protein farnesyltransferase/geranylgeranyltransferase type-1 subunit alpha</fullName>
        <ecNumber>2.5.1.58</ecNumber>
        <ecNumber>2.5.1.59</ecNumber>
    </recommendedName>
    <alternativeName>
        <fullName>CAAX farnesyltransferase subunit alpha</fullName>
    </alternativeName>
    <alternativeName>
        <fullName>FTase-alpha</fullName>
    </alternativeName>
    <alternativeName>
        <fullName>Ras proteins prenyltransferase subunit alpha</fullName>
    </alternativeName>
    <alternativeName>
        <fullName>Type I protein geranyl-geranyltransferase subunit alpha</fullName>
        <shortName>GGTase-I-alpha</shortName>
    </alternativeName>
</protein>
<keyword id="KW-0460">Magnesium</keyword>
<keyword id="KW-0637">Prenyltransferase</keyword>
<keyword id="KW-1185">Reference proteome</keyword>
<keyword id="KW-0677">Repeat</keyword>
<keyword id="KW-0808">Transferase</keyword>
<accession>Q9LX33</accession>
<accession>O65346</accession>
<comment type="function">
    <text evidence="2 3">Essential subunit of both the farnesyltransferase and the geranylgeranyltransferase complex. Contributes to the transfer of a farnesyl or geranylgeranyl moiety from farnesyl or geranylgeranyl diphosphate to a cysteine at the fourth position from the C-terminus of several proteins having the C-terminal sequence Cys-aliphatic-aliphatic-X.</text>
</comment>
<comment type="catalytic activity">
    <reaction>
        <text>L-cysteinyl-[protein] + (2E,6E)-farnesyl diphosphate = S-(2E,6E)-farnesyl-L-cysteinyl-[protein] + diphosphate</text>
        <dbReference type="Rhea" id="RHEA:13345"/>
        <dbReference type="Rhea" id="RHEA-COMP:10131"/>
        <dbReference type="Rhea" id="RHEA-COMP:11535"/>
        <dbReference type="ChEBI" id="CHEBI:29950"/>
        <dbReference type="ChEBI" id="CHEBI:33019"/>
        <dbReference type="ChEBI" id="CHEBI:86019"/>
        <dbReference type="ChEBI" id="CHEBI:175763"/>
        <dbReference type="EC" id="2.5.1.58"/>
    </reaction>
</comment>
<comment type="catalytic activity">
    <reaction>
        <text>geranylgeranyl diphosphate + L-cysteinyl-[protein] = S-geranylgeranyl-L-cysteinyl-[protein] + diphosphate</text>
        <dbReference type="Rhea" id="RHEA:21240"/>
        <dbReference type="Rhea" id="RHEA-COMP:10131"/>
        <dbReference type="Rhea" id="RHEA-COMP:11537"/>
        <dbReference type="ChEBI" id="CHEBI:29950"/>
        <dbReference type="ChEBI" id="CHEBI:33019"/>
        <dbReference type="ChEBI" id="CHEBI:57533"/>
        <dbReference type="ChEBI" id="CHEBI:86021"/>
        <dbReference type="EC" id="2.5.1.59"/>
    </reaction>
</comment>
<comment type="cofactor">
    <cofactor evidence="1">
        <name>Mg(2+)</name>
        <dbReference type="ChEBI" id="CHEBI:18420"/>
    </cofactor>
</comment>
<comment type="biophysicochemical properties">
    <kinetics>
        <KM evidence="2 3">5.4 uM for CVIM substrate and for farnesyl transferase activity</KM>
        <KM evidence="2 3">5.5 uM for CVIQ substrate and for farnesyl transferase activity</KM>
        <KM evidence="2 3">6.9 uM for CVII substrate and for farnesyl transferase activity</KM>
        <KM evidence="2 3">7 uM for CVIL substrate and for farnesyl transferase activity</KM>
        <KM evidence="2 3">5.8 uM for CVIM substrate and for geranylgeranyl transferase activity</KM>
        <KM evidence="2 3">3.5 uM for CVIQ substrate and for geranylgeranyl transferase activity</KM>
        <KM evidence="2 3">19 uM for CVII substrate and for geranylgeranyl transferase activity</KM>
        <KM evidence="2 3">17.2 uM for CVIL substrate and for geranylgeranyl transferase activity</KM>
    </kinetics>
    <phDependence>
        <text evidence="2 3">Optimum pH is 7.9-8.5 for CTIL substrate and geranylgeranyl transferase activity.</text>
    </phDependence>
    <temperatureDependence>
        <text evidence="2 3">Optimum temperature is 30-37 degrees Celsius for CTIL substrate and geranylgeranyl transferase activity.</text>
    </temperatureDependence>
</comment>
<comment type="subunit">
    <text>Heterodimer of an alpha and a beta subunit.</text>
</comment>
<comment type="interaction">
    <interactant intactId="EBI-1553317">
        <id>Q9LX33</id>
    </interactant>
    <interactant intactId="EBI-1553332">
        <id>Q38920</id>
        <label>FTB</label>
    </interactant>
    <organismsDiffer>false</organismsDiffer>
    <experiments>4</experiments>
</comment>
<comment type="similarity">
    <text evidence="4">Belongs to the protein prenyltransferase subunit alpha family.</text>
</comment>
<comment type="sequence caution" evidence="4">
    <conflict type="erroneous initiation">
        <sequence resource="EMBL-CDS" id="CAB91608"/>
    </conflict>
    <text>Extended N-terminus.</text>
</comment>
<dbReference type="EC" id="2.5.1.58"/>
<dbReference type="EC" id="2.5.1.59"/>
<dbReference type="EMBL" id="AF064542">
    <property type="protein sequence ID" value="AAC61853.1"/>
    <property type="molecule type" value="mRNA"/>
</dbReference>
<dbReference type="EMBL" id="AL356014">
    <property type="protein sequence ID" value="CAB91608.1"/>
    <property type="status" value="ALT_INIT"/>
    <property type="molecule type" value="Genomic_DNA"/>
</dbReference>
<dbReference type="EMBL" id="CP002686">
    <property type="protein sequence ID" value="AEE79914.1"/>
    <property type="molecule type" value="Genomic_DNA"/>
</dbReference>
<dbReference type="PIR" id="T49006">
    <property type="entry name" value="T49006"/>
</dbReference>
<dbReference type="PIR" id="T51811">
    <property type="entry name" value="T51811"/>
</dbReference>
<dbReference type="RefSeq" id="NP_567084.1">
    <property type="nucleotide sequence ID" value="NM_115800.6"/>
</dbReference>
<dbReference type="SMR" id="Q9LX33"/>
<dbReference type="BioGRID" id="10422">
    <property type="interactions" value="7"/>
</dbReference>
<dbReference type="FunCoup" id="Q9LX33">
    <property type="interactions" value="4239"/>
</dbReference>
<dbReference type="IntAct" id="Q9LX33">
    <property type="interactions" value="1"/>
</dbReference>
<dbReference type="STRING" id="3702.Q9LX33"/>
<dbReference type="PaxDb" id="3702-AT3G59380.1"/>
<dbReference type="ProteomicsDB" id="230607"/>
<dbReference type="EnsemblPlants" id="AT3G59380.1">
    <property type="protein sequence ID" value="AT3G59380.1"/>
    <property type="gene ID" value="AT3G59380"/>
</dbReference>
<dbReference type="GeneID" id="825107"/>
<dbReference type="Gramene" id="AT3G59380.1">
    <property type="protein sequence ID" value="AT3G59380.1"/>
    <property type="gene ID" value="AT3G59380"/>
</dbReference>
<dbReference type="KEGG" id="ath:AT3G59380"/>
<dbReference type="Araport" id="AT3G59380"/>
<dbReference type="TAIR" id="AT3G59380">
    <property type="gene designation" value="FTA"/>
</dbReference>
<dbReference type="eggNOG" id="KOG0530">
    <property type="taxonomic scope" value="Eukaryota"/>
</dbReference>
<dbReference type="HOGENOM" id="CLU_026582_1_1_1"/>
<dbReference type="InParanoid" id="Q9LX33"/>
<dbReference type="OMA" id="WAIRTFN"/>
<dbReference type="BioCyc" id="MetaCyc:AT3G59380-MONOMER"/>
<dbReference type="PRO" id="PR:Q9LX33"/>
<dbReference type="Proteomes" id="UP000006548">
    <property type="component" value="Chromosome 3"/>
</dbReference>
<dbReference type="ExpressionAtlas" id="Q9LX33">
    <property type="expression patterns" value="baseline and differential"/>
</dbReference>
<dbReference type="GO" id="GO:0005953">
    <property type="term" value="C:CAAX-protein geranylgeranyltransferase complex"/>
    <property type="evidence" value="ECO:0000314"/>
    <property type="project" value="TAIR"/>
</dbReference>
<dbReference type="GO" id="GO:0004662">
    <property type="term" value="F:CAAX-protein geranylgeranyltransferase activity"/>
    <property type="evidence" value="ECO:0007669"/>
    <property type="project" value="UniProtKB-EC"/>
</dbReference>
<dbReference type="GO" id="GO:0004311">
    <property type="term" value="F:geranylgeranyl diphosphate synthase activity"/>
    <property type="evidence" value="ECO:0000304"/>
    <property type="project" value="TAIR"/>
</dbReference>
<dbReference type="GO" id="GO:0004660">
    <property type="term" value="F:protein farnesyltransferase activity"/>
    <property type="evidence" value="ECO:0000250"/>
    <property type="project" value="UniProtKB"/>
</dbReference>
<dbReference type="GO" id="GO:0004661">
    <property type="term" value="F:protein geranylgeranyltransferase activity"/>
    <property type="evidence" value="ECO:0000250"/>
    <property type="project" value="UniProtKB"/>
</dbReference>
<dbReference type="GO" id="GO:0046982">
    <property type="term" value="F:protein heterodimerization activity"/>
    <property type="evidence" value="ECO:0000353"/>
    <property type="project" value="TAIR"/>
</dbReference>
<dbReference type="GO" id="GO:0008318">
    <property type="term" value="F:protein prenyltransferase activity"/>
    <property type="evidence" value="ECO:0000314"/>
    <property type="project" value="TAIR"/>
</dbReference>
<dbReference type="GO" id="GO:0009788">
    <property type="term" value="P:negative regulation of abscisic acid-activated signaling pathway"/>
    <property type="evidence" value="ECO:0000315"/>
    <property type="project" value="TAIR"/>
</dbReference>
<dbReference type="GO" id="GO:0018343">
    <property type="term" value="P:protein farnesylation"/>
    <property type="evidence" value="ECO:0000250"/>
    <property type="project" value="UniProtKB"/>
</dbReference>
<dbReference type="GO" id="GO:0018344">
    <property type="term" value="P:protein geranylgeranylation"/>
    <property type="evidence" value="ECO:0000314"/>
    <property type="project" value="TAIR"/>
</dbReference>
<dbReference type="GO" id="GO:0018342">
    <property type="term" value="P:protein prenylation"/>
    <property type="evidence" value="ECO:0000314"/>
    <property type="project" value="TAIR"/>
</dbReference>
<dbReference type="GO" id="GO:0008360">
    <property type="term" value="P:regulation of cell shape"/>
    <property type="evidence" value="ECO:0000315"/>
    <property type="project" value="TAIR"/>
</dbReference>
<dbReference type="GO" id="GO:0048509">
    <property type="term" value="P:regulation of meristem development"/>
    <property type="evidence" value="ECO:0000315"/>
    <property type="project" value="TAIR"/>
</dbReference>
<dbReference type="GO" id="GO:0009414">
    <property type="term" value="P:response to water deprivation"/>
    <property type="evidence" value="ECO:0000315"/>
    <property type="project" value="TAIR"/>
</dbReference>
<dbReference type="FunFam" id="1.25.40.120:FF:000004">
    <property type="entry name" value="Protein farnesyltransferase/geranylgeranyltransferase type-1 subunit alpha"/>
    <property type="match status" value="1"/>
</dbReference>
<dbReference type="Gene3D" id="1.25.40.120">
    <property type="entry name" value="Protein prenylyltransferase"/>
    <property type="match status" value="1"/>
</dbReference>
<dbReference type="InterPro" id="IPR002088">
    <property type="entry name" value="Prenyl_trans_a"/>
</dbReference>
<dbReference type="PANTHER" id="PTHR11129">
    <property type="entry name" value="PROTEIN FARNESYLTRANSFERASE ALPHA SUBUNIT/RAB GERANYLGERANYL TRANSFERASE ALPHA SUBUNIT"/>
    <property type="match status" value="1"/>
</dbReference>
<dbReference type="PANTHER" id="PTHR11129:SF1">
    <property type="entry name" value="PROTEIN FARNESYLTRANSFERASE_GERANYLGERANYLTRANSFERASE TYPE-1 SUBUNIT ALPHA"/>
    <property type="match status" value="1"/>
</dbReference>
<dbReference type="Pfam" id="PF01239">
    <property type="entry name" value="PPTA"/>
    <property type="match status" value="4"/>
</dbReference>
<dbReference type="SUPFAM" id="SSF48439">
    <property type="entry name" value="Protein prenylyltransferase"/>
    <property type="match status" value="1"/>
</dbReference>
<dbReference type="PROSITE" id="PS51147">
    <property type="entry name" value="PFTA"/>
    <property type="match status" value="5"/>
</dbReference>
<name>FNTA_ARATH</name>
<sequence>MNFDETVPLSQRLEWSDVVPLTQDDGPNPVVPIAYKEEFRETMDYFRAIYFSDERSPRALRLTEETLLLNSGNYTVWHFRRLVLEALNHDLFEELEFIERIAEDNSKNYQLWHHRRWVAEKLGPDVAGRELEFTRRVLSLDAKHYHAWSHRQWTLRALGGWEDELDYCHELLEADVFNNSAWNQRYYVITQSPLLGGLEAMRESEVSYTIKAILTNPANESSWRYLKALYKDDKESWISDPSVSSVCLNVLSRTDCFHGFALSTLLDLLCDGLRPTNEHKDSVRALANEEPETNLANLVCTILGRVDPVRANYWAWRKSKITVAAI</sequence>
<evidence type="ECO:0000250" key="1">
    <source>
        <dbReference type="UniProtKB" id="P29703"/>
    </source>
</evidence>
<evidence type="ECO:0000269" key="2">
    <source>
    </source>
</evidence>
<evidence type="ECO:0000269" key="3">
    <source>
    </source>
</evidence>
<evidence type="ECO:0000305" key="4"/>